<dbReference type="EC" id="6.1.1.16" evidence="1"/>
<dbReference type="EMBL" id="CP001104">
    <property type="protein sequence ID" value="ACR71504.1"/>
    <property type="molecule type" value="Genomic_DNA"/>
</dbReference>
<dbReference type="RefSeq" id="WP_012738740.1">
    <property type="nucleotide sequence ID" value="NC_012778.1"/>
</dbReference>
<dbReference type="SMR" id="C4Z3N5"/>
<dbReference type="STRING" id="515620.EUBELI_00490"/>
<dbReference type="GeneID" id="41355252"/>
<dbReference type="KEGG" id="eel:EUBELI_00490"/>
<dbReference type="eggNOG" id="COG0215">
    <property type="taxonomic scope" value="Bacteria"/>
</dbReference>
<dbReference type="HOGENOM" id="CLU_013528_0_1_9"/>
<dbReference type="Proteomes" id="UP000001476">
    <property type="component" value="Chromosome"/>
</dbReference>
<dbReference type="GO" id="GO:0005829">
    <property type="term" value="C:cytosol"/>
    <property type="evidence" value="ECO:0007669"/>
    <property type="project" value="TreeGrafter"/>
</dbReference>
<dbReference type="GO" id="GO:0005524">
    <property type="term" value="F:ATP binding"/>
    <property type="evidence" value="ECO:0007669"/>
    <property type="project" value="UniProtKB-UniRule"/>
</dbReference>
<dbReference type="GO" id="GO:0004817">
    <property type="term" value="F:cysteine-tRNA ligase activity"/>
    <property type="evidence" value="ECO:0007669"/>
    <property type="project" value="UniProtKB-UniRule"/>
</dbReference>
<dbReference type="GO" id="GO:0008270">
    <property type="term" value="F:zinc ion binding"/>
    <property type="evidence" value="ECO:0007669"/>
    <property type="project" value="UniProtKB-UniRule"/>
</dbReference>
<dbReference type="GO" id="GO:0006423">
    <property type="term" value="P:cysteinyl-tRNA aminoacylation"/>
    <property type="evidence" value="ECO:0007669"/>
    <property type="project" value="UniProtKB-UniRule"/>
</dbReference>
<dbReference type="CDD" id="cd00672">
    <property type="entry name" value="CysRS_core"/>
    <property type="match status" value="1"/>
</dbReference>
<dbReference type="FunFam" id="3.40.50.620:FF:000009">
    <property type="entry name" value="Cysteine--tRNA ligase"/>
    <property type="match status" value="1"/>
</dbReference>
<dbReference type="Gene3D" id="1.20.120.1910">
    <property type="entry name" value="Cysteine-tRNA ligase, C-terminal anti-codon recognition domain"/>
    <property type="match status" value="1"/>
</dbReference>
<dbReference type="Gene3D" id="3.40.50.620">
    <property type="entry name" value="HUPs"/>
    <property type="match status" value="1"/>
</dbReference>
<dbReference type="HAMAP" id="MF_00041">
    <property type="entry name" value="Cys_tRNA_synth"/>
    <property type="match status" value="1"/>
</dbReference>
<dbReference type="InterPro" id="IPR015803">
    <property type="entry name" value="Cys-tRNA-ligase"/>
</dbReference>
<dbReference type="InterPro" id="IPR015273">
    <property type="entry name" value="Cys-tRNA-synt_Ia_DALR"/>
</dbReference>
<dbReference type="InterPro" id="IPR024909">
    <property type="entry name" value="Cys-tRNA/MSH_ligase"/>
</dbReference>
<dbReference type="InterPro" id="IPR056411">
    <property type="entry name" value="CysS_C"/>
</dbReference>
<dbReference type="InterPro" id="IPR014729">
    <property type="entry name" value="Rossmann-like_a/b/a_fold"/>
</dbReference>
<dbReference type="InterPro" id="IPR032678">
    <property type="entry name" value="tRNA-synt_1_cat_dom"/>
</dbReference>
<dbReference type="InterPro" id="IPR009080">
    <property type="entry name" value="tRNAsynth_Ia_anticodon-bd"/>
</dbReference>
<dbReference type="NCBIfam" id="TIGR00435">
    <property type="entry name" value="cysS"/>
    <property type="match status" value="1"/>
</dbReference>
<dbReference type="PANTHER" id="PTHR10890:SF3">
    <property type="entry name" value="CYSTEINE--TRNA LIGASE, CYTOPLASMIC"/>
    <property type="match status" value="1"/>
</dbReference>
<dbReference type="PANTHER" id="PTHR10890">
    <property type="entry name" value="CYSTEINYL-TRNA SYNTHETASE"/>
    <property type="match status" value="1"/>
</dbReference>
<dbReference type="Pfam" id="PF23493">
    <property type="entry name" value="CysS_C"/>
    <property type="match status" value="1"/>
</dbReference>
<dbReference type="Pfam" id="PF09190">
    <property type="entry name" value="DALR_2"/>
    <property type="match status" value="1"/>
</dbReference>
<dbReference type="Pfam" id="PF01406">
    <property type="entry name" value="tRNA-synt_1e"/>
    <property type="match status" value="1"/>
</dbReference>
<dbReference type="PRINTS" id="PR00983">
    <property type="entry name" value="TRNASYNTHCYS"/>
</dbReference>
<dbReference type="SMART" id="SM00840">
    <property type="entry name" value="DALR_2"/>
    <property type="match status" value="1"/>
</dbReference>
<dbReference type="SUPFAM" id="SSF47323">
    <property type="entry name" value="Anticodon-binding domain of a subclass of class I aminoacyl-tRNA synthetases"/>
    <property type="match status" value="1"/>
</dbReference>
<dbReference type="SUPFAM" id="SSF52374">
    <property type="entry name" value="Nucleotidylyl transferase"/>
    <property type="match status" value="1"/>
</dbReference>
<accession>C4Z3N5</accession>
<evidence type="ECO:0000255" key="1">
    <source>
        <dbReference type="HAMAP-Rule" id="MF_00041"/>
    </source>
</evidence>
<comment type="catalytic activity">
    <reaction evidence="1">
        <text>tRNA(Cys) + L-cysteine + ATP = L-cysteinyl-tRNA(Cys) + AMP + diphosphate</text>
        <dbReference type="Rhea" id="RHEA:17773"/>
        <dbReference type="Rhea" id="RHEA-COMP:9661"/>
        <dbReference type="Rhea" id="RHEA-COMP:9679"/>
        <dbReference type="ChEBI" id="CHEBI:30616"/>
        <dbReference type="ChEBI" id="CHEBI:33019"/>
        <dbReference type="ChEBI" id="CHEBI:35235"/>
        <dbReference type="ChEBI" id="CHEBI:78442"/>
        <dbReference type="ChEBI" id="CHEBI:78517"/>
        <dbReference type="ChEBI" id="CHEBI:456215"/>
        <dbReference type="EC" id="6.1.1.16"/>
    </reaction>
</comment>
<comment type="cofactor">
    <cofactor evidence="1">
        <name>Zn(2+)</name>
        <dbReference type="ChEBI" id="CHEBI:29105"/>
    </cofactor>
    <text evidence="1">Binds 1 zinc ion per subunit.</text>
</comment>
<comment type="subunit">
    <text evidence="1">Monomer.</text>
</comment>
<comment type="subcellular location">
    <subcellularLocation>
        <location evidence="1">Cytoplasm</location>
    </subcellularLocation>
</comment>
<comment type="similarity">
    <text evidence="1">Belongs to the class-I aminoacyl-tRNA synthetase family.</text>
</comment>
<reference key="1">
    <citation type="journal article" date="2009" name="Proc. Natl. Acad. Sci. U.S.A.">
        <title>Characterizing a model human gut microbiota composed of members of its two dominant bacterial phyla.</title>
        <authorList>
            <person name="Mahowald M.A."/>
            <person name="Rey F.E."/>
            <person name="Seedorf H."/>
            <person name="Turnbaugh P.J."/>
            <person name="Fulton R.S."/>
            <person name="Wollam A."/>
            <person name="Shah N."/>
            <person name="Wang C."/>
            <person name="Magrini V."/>
            <person name="Wilson R.K."/>
            <person name="Cantarel B.L."/>
            <person name="Coutinho P.M."/>
            <person name="Henrissat B."/>
            <person name="Crock L.W."/>
            <person name="Russell A."/>
            <person name="Verberkmoes N.C."/>
            <person name="Hettich R.L."/>
            <person name="Gordon J.I."/>
        </authorList>
    </citation>
    <scope>NUCLEOTIDE SEQUENCE [LARGE SCALE GENOMIC DNA]</scope>
    <source>
        <strain>ATCC 27750 / DSM 3376 / VPI C15-48 / C15-B4</strain>
    </source>
</reference>
<protein>
    <recommendedName>
        <fullName evidence="1">Cysteine--tRNA ligase</fullName>
        <ecNumber evidence="1">6.1.1.16</ecNumber>
    </recommendedName>
    <alternativeName>
        <fullName evidence="1">Cysteinyl-tRNA synthetase</fullName>
        <shortName evidence="1">CysRS</shortName>
    </alternativeName>
</protein>
<keyword id="KW-0030">Aminoacyl-tRNA synthetase</keyword>
<keyword id="KW-0067">ATP-binding</keyword>
<keyword id="KW-0963">Cytoplasm</keyword>
<keyword id="KW-0436">Ligase</keyword>
<keyword id="KW-0479">Metal-binding</keyword>
<keyword id="KW-0547">Nucleotide-binding</keyword>
<keyword id="KW-0648">Protein biosynthesis</keyword>
<keyword id="KW-1185">Reference proteome</keyword>
<keyword id="KW-0862">Zinc</keyword>
<organism>
    <name type="scientific">Lachnospira eligens (strain ATCC 27750 / DSM 3376 / VPI C15-48 / C15-B4)</name>
    <name type="common">Eubacterium eligens</name>
    <dbReference type="NCBI Taxonomy" id="515620"/>
    <lineage>
        <taxon>Bacteria</taxon>
        <taxon>Bacillati</taxon>
        <taxon>Bacillota</taxon>
        <taxon>Clostridia</taxon>
        <taxon>Lachnospirales</taxon>
        <taxon>Lachnospiraceae</taxon>
        <taxon>Lachnospira</taxon>
    </lineage>
</organism>
<proteinExistence type="inferred from homology"/>
<feature type="chain" id="PRO_1000202122" description="Cysteine--tRNA ligase">
    <location>
        <begin position="1"/>
        <end position="472"/>
    </location>
</feature>
<feature type="short sequence motif" description="'HIGH' region">
    <location>
        <begin position="29"/>
        <end position="39"/>
    </location>
</feature>
<feature type="short sequence motif" description="'KMSKS' region">
    <location>
        <begin position="271"/>
        <end position="275"/>
    </location>
</feature>
<feature type="binding site" evidence="1">
    <location>
        <position position="27"/>
    </location>
    <ligand>
        <name>Zn(2+)</name>
        <dbReference type="ChEBI" id="CHEBI:29105"/>
    </ligand>
</feature>
<feature type="binding site" evidence="1">
    <location>
        <position position="214"/>
    </location>
    <ligand>
        <name>Zn(2+)</name>
        <dbReference type="ChEBI" id="CHEBI:29105"/>
    </ligand>
</feature>
<feature type="binding site" evidence="1">
    <location>
        <position position="239"/>
    </location>
    <ligand>
        <name>Zn(2+)</name>
        <dbReference type="ChEBI" id="CHEBI:29105"/>
    </ligand>
</feature>
<feature type="binding site" evidence="1">
    <location>
        <position position="243"/>
    </location>
    <ligand>
        <name>Zn(2+)</name>
        <dbReference type="ChEBI" id="CHEBI:29105"/>
    </ligand>
</feature>
<feature type="binding site" evidence="1">
    <location>
        <position position="274"/>
    </location>
    <ligand>
        <name>ATP</name>
        <dbReference type="ChEBI" id="CHEBI:30616"/>
    </ligand>
</feature>
<name>SYC_LACE2</name>
<sequence>MRIYNTLSRRKEEFKPLEEGKVKMYVCGPTVYNLIHIGNARPMIVFDTVRRYLEYKGYDVNYVSNFTDVDDKIIKKANEEGVSAEEISTRYIAECKKDMEGMNIKPATTHPLATQEIGGMIDMIQTLIDKGYAYEVNGTVYYRTRKFAEYGKLSKKNIDDLEAGHRDEAHSLKVTGEDEKEDPLDFVLWKPKKEGEPSWPSPWSDGRPGWHIECSVMSKKYLADEIDIHAGGEDLIFPHHENEIAQSEAANGVPFSKYWMHNAFLNIDNKKMSKSLGNFFTVRDISREYDLEVLRFFMLSAHYRNPVNFSHDLMESAKNGLDRILTAVDNLRHLSENAKDVIMTEDEKKIIASIDDIYKKFEDSMDDDFNTADAISAIFELVKLANSNSSSDNSKEYIDTLMKKITTLTDILGLKTDKKEEMLDEDIEALIAERQQARKDKNFARADEIRDELLAKGIVLKDTREGVRWSRA</sequence>
<gene>
    <name evidence="1" type="primary">cysS</name>
    <name type="ordered locus">EUBELI_00490</name>
</gene>